<comment type="function">
    <text evidence="1">Plant defense neurotoxin that causes pain and systemic symptoms in mammals via modulation of voltage-gated sodium channels (Nav). Potent modulator of human Nav1.5/SCN5A (EC(50)=55 nM), Nav1.6/SCN8A (EC(50)=0.86 nM), and Nav1.7/SCN9A (EC(50)=208 nM), where it shifts the activation threshold to more negative potentials and delays fast inactivation. Also shifts the voltage-dependence of steady-state fast inactivation of Nav1.6/SCN8A, but not that of Nav1.5/SCN5A or Nav1.7/SCN9A. On Nav1.7/SCN9A, principally acts by binding to extracellular loops of domain IV (Nav site 3). In vivo, intraplantar injection into mice causes numerous dose-dependent, immediate, and long-lasting spontaneous pain behaviors, while no swelling is observed in the injected paw. At the highest doses tested, systemic symptoms including hypokinesia and hypersalivation are observed.</text>
</comment>
<comment type="subcellular location">
    <subcellularLocation>
        <location evidence="1">Secreted</location>
    </subcellularLocation>
</comment>
<comment type="tissue specificity">
    <text evidence="5">Expressed in trichomes, that are stiff epidermal hairs located on the surface of petioles and leaves.</text>
</comment>
<comment type="domain">
    <text evidence="4">The presence of 'disulfide through disulfide knots' structurally defines this protein as a knottin. This toxin contains 2 'disulfide through disulfide knots'.</text>
</comment>
<comment type="similarity">
    <text evidence="4">Belongs to the urticatoxin-2 family.</text>
</comment>
<feature type="signal peptide" evidence="2">
    <location>
        <begin position="1"/>
        <end position="24"/>
    </location>
</feature>
<feature type="propeptide" id="PRO_0000459320" evidence="1">
    <location>
        <begin position="25"/>
        <end position="69"/>
    </location>
</feature>
<feature type="chain" id="PRO_5036777488" description="Beta/delta-urticatoxin-Dm2a" evidence="1">
    <location>
        <begin position="70"/>
        <end position="131"/>
    </location>
</feature>
<feature type="disulfide bond" evidence="4">
    <location>
        <begin position="72"/>
        <end position="88"/>
    </location>
</feature>
<feature type="disulfide bond" evidence="4">
    <location>
        <begin position="79"/>
        <end position="93"/>
    </location>
</feature>
<feature type="disulfide bond" evidence="4">
    <location>
        <begin position="87"/>
        <end position="101"/>
    </location>
</feature>
<feature type="disulfide bond" evidence="4">
    <location>
        <begin position="103"/>
        <end position="117"/>
    </location>
</feature>
<feature type="disulfide bond" evidence="4">
    <location>
        <begin position="110"/>
        <end position="122"/>
    </location>
</feature>
<feature type="disulfide bond" evidence="4">
    <location>
        <begin position="116"/>
        <end position="130"/>
    </location>
</feature>
<proteinExistence type="evidence at transcript level"/>
<reference evidence="6" key="1">
    <citation type="journal article" date="2022" name="J. Biol. Chem.">
        <title>Neurotoxic and cytotoxic peptides underlie the painful stings of the tree nettle Urtica ferox.</title>
        <authorList>
            <person name="Xie J."/>
            <person name="Robinson S.D."/>
            <person name="Gilding E.K."/>
            <person name="Jami S."/>
            <person name="Deuis J.R."/>
            <person name="Rehm F.B.H."/>
            <person name="Yap K."/>
            <person name="Ragnarsson L."/>
            <person name="Chan L.Y."/>
            <person name="Hamilton B.R."/>
            <person name="Harvey P.J."/>
            <person name="Craik D.J."/>
            <person name="Vetter I."/>
            <person name="Durek T."/>
        </authorList>
    </citation>
    <scope>NUCLEOTIDE SEQUENCE [MRNA]</scope>
</reference>
<organism>
    <name type="scientific">Dendrocnide moroides</name>
    <name type="common">Gympie stinging tree</name>
    <name type="synonym">Laportea moroides</name>
    <dbReference type="NCBI Taxonomy" id="1842752"/>
    <lineage>
        <taxon>Eukaryota</taxon>
        <taxon>Viridiplantae</taxon>
        <taxon>Streptophyta</taxon>
        <taxon>Embryophyta</taxon>
        <taxon>Tracheophyta</taxon>
        <taxon>Spermatophyta</taxon>
        <taxon>Magnoliopsida</taxon>
        <taxon>eudicotyledons</taxon>
        <taxon>Gunneridae</taxon>
        <taxon>Pentapetalae</taxon>
        <taxon>rosids</taxon>
        <taxon>fabids</taxon>
        <taxon>Rosales</taxon>
        <taxon>Urticaceae</taxon>
        <taxon>Dendrocnide</taxon>
    </lineage>
</organism>
<evidence type="ECO:0000250" key="1">
    <source>
        <dbReference type="UniProtKB" id="A0A976XJR9"/>
    </source>
</evidence>
<evidence type="ECO:0000255" key="2"/>
<evidence type="ECO:0000303" key="3">
    <source>
    </source>
</evidence>
<evidence type="ECO:0000305" key="4"/>
<evidence type="ECO:0000305" key="5">
    <source>
    </source>
</evidence>
<evidence type="ECO:0000312" key="6">
    <source>
        <dbReference type="EMBL" id="UVC57621.1"/>
    </source>
</evidence>
<dbReference type="EMBL" id="OK376603">
    <property type="protein sequence ID" value="UVC57621.1"/>
    <property type="molecule type" value="mRNA"/>
</dbReference>
<dbReference type="SMR" id="A0A976XKR0"/>
<dbReference type="GO" id="GO:0005576">
    <property type="term" value="C:extracellular region"/>
    <property type="evidence" value="ECO:0007669"/>
    <property type="project" value="UniProtKB-SubCell"/>
</dbReference>
<dbReference type="GO" id="GO:0017080">
    <property type="term" value="F:sodium channel regulator activity"/>
    <property type="evidence" value="ECO:0007669"/>
    <property type="project" value="UniProtKB-KW"/>
</dbReference>
<dbReference type="GO" id="GO:0090729">
    <property type="term" value="F:toxin activity"/>
    <property type="evidence" value="ECO:0007669"/>
    <property type="project" value="UniProtKB-KW"/>
</dbReference>
<dbReference type="GO" id="GO:0006952">
    <property type="term" value="P:defense response"/>
    <property type="evidence" value="ECO:0007669"/>
    <property type="project" value="UniProtKB-KW"/>
</dbReference>
<keyword id="KW-1015">Disulfide bond</keyword>
<keyword id="KW-0872">Ion channel impairing toxin</keyword>
<keyword id="KW-0960">Knottin</keyword>
<keyword id="KW-0528">Neurotoxin</keyword>
<keyword id="KW-0611">Plant defense</keyword>
<keyword id="KW-0964">Secreted</keyword>
<keyword id="KW-0732">Signal</keyword>
<keyword id="KW-0800">Toxin</keyword>
<keyword id="KW-0738">Voltage-gated sodium channel impairing toxin</keyword>
<protein>
    <recommendedName>
        <fullName evidence="3">Beta/delta-urticatoxin-Dm2a</fullName>
        <shortName evidence="3">Beta/delta-Dm2a</shortName>
    </recommendedName>
</protein>
<accession>A0A976XKR0</accession>
<name>NAV2A_DENMD</name>
<sequence length="131" mass="13240">MKSSATVVLLVAAVTAAMVMSSSASGDAVMIDEHNNIMTSVEGKRGIGSSVVANGGNRKMANVLLSGWENKCAGHGESCLGIGISGCCKGYYCSWPSGSICLCVPKGDPCGAMHTCCDGLSCTGFFSGDCV</sequence>